<proteinExistence type="inferred from homology"/>
<accession>P0A1D7</accession>
<accession>Q9LC07</accession>
<name>CLPP_SALTY</name>
<sequence>MSYSGERDNLAPHMALVPMVIEQTSRGERSFDIYSRLLKERVIFLTGQVEDHMANLIVAQMLFLEAENPEKDIYLYINSPGGVITAGMSIYDTMQFIKPDVSTICMGQAASMGAFLLTAGAKGKRFCLPNSRVMIHQPLGGYQGQATDIEIHAREILKVKGRMNELMAHHTGQSLEQIERDTERDRFLSAPEAVEYGLVDSILTHRN</sequence>
<evidence type="ECO:0000250" key="1"/>
<evidence type="ECO:0000255" key="2">
    <source>
        <dbReference type="HAMAP-Rule" id="MF_00444"/>
    </source>
</evidence>
<organism>
    <name type="scientific">Salmonella typhimurium (strain LT2 / SGSC1412 / ATCC 700720)</name>
    <dbReference type="NCBI Taxonomy" id="99287"/>
    <lineage>
        <taxon>Bacteria</taxon>
        <taxon>Pseudomonadati</taxon>
        <taxon>Pseudomonadota</taxon>
        <taxon>Gammaproteobacteria</taxon>
        <taxon>Enterobacterales</taxon>
        <taxon>Enterobacteriaceae</taxon>
        <taxon>Salmonella</taxon>
    </lineage>
</organism>
<comment type="function">
    <text evidence="2">Cleaves peptides in various proteins in a process that requires ATP hydrolysis. Has a chymotrypsin-like activity. Plays a major role in the degradation of misfolded proteins.</text>
</comment>
<comment type="catalytic activity">
    <reaction evidence="2">
        <text>Hydrolysis of proteins to small peptides in the presence of ATP and magnesium. alpha-casein is the usual test substrate. In the absence of ATP, only oligopeptides shorter than five residues are hydrolyzed (such as succinyl-Leu-Tyr-|-NHMec, and Leu-Tyr-Leu-|-Tyr-Trp, in which cleavage of the -Tyr-|-Leu- and -Tyr-|-Trp bonds also occurs).</text>
        <dbReference type="EC" id="3.4.21.92"/>
    </reaction>
</comment>
<comment type="subunit">
    <text evidence="2">Fourteen ClpP subunits assemble into 2 heptameric rings which stack back to back to give a disk-like structure with a central cavity, resembling the structure of eukaryotic proteasomes. Component of the ClpAP and ClpXP complexes.</text>
</comment>
<comment type="subcellular location">
    <subcellularLocation>
        <location evidence="2">Cytoplasm</location>
    </subcellularLocation>
</comment>
<comment type="similarity">
    <text evidence="2">Belongs to the peptidase S14 family.</text>
</comment>
<protein>
    <recommendedName>
        <fullName evidence="2">ATP-dependent Clp protease proteolytic subunit</fullName>
        <ecNumber evidence="2">3.4.21.92</ecNumber>
    </recommendedName>
    <alternativeName>
        <fullName evidence="2">Endopeptidase Clp</fullName>
    </alternativeName>
</protein>
<feature type="propeptide" id="PRO_0000268020" evidence="1">
    <location>
        <begin position="1"/>
        <end position="14"/>
    </location>
</feature>
<feature type="chain" id="PRO_0000179645" description="ATP-dependent Clp protease proteolytic subunit">
    <location>
        <begin position="15"/>
        <end position="207"/>
    </location>
</feature>
<feature type="active site" description="Nucleophile" evidence="2">
    <location>
        <position position="111"/>
    </location>
</feature>
<feature type="active site" evidence="2">
    <location>
        <position position="136"/>
    </location>
</feature>
<keyword id="KW-0963">Cytoplasm</keyword>
<keyword id="KW-0378">Hydrolase</keyword>
<keyword id="KW-0645">Protease</keyword>
<keyword id="KW-1185">Reference proteome</keyword>
<keyword id="KW-0720">Serine protease</keyword>
<keyword id="KW-0865">Zymogen</keyword>
<dbReference type="EC" id="3.4.21.92" evidence="2"/>
<dbReference type="EMBL" id="AB033628">
    <property type="protein sequence ID" value="BAA94668.1"/>
    <property type="molecule type" value="Genomic_DNA"/>
</dbReference>
<dbReference type="EMBL" id="AE006468">
    <property type="protein sequence ID" value="AAL19403.1"/>
    <property type="molecule type" value="Genomic_DNA"/>
</dbReference>
<dbReference type="RefSeq" id="NP_459444.1">
    <property type="nucleotide sequence ID" value="NC_003197.2"/>
</dbReference>
<dbReference type="RefSeq" id="WP_000122257.1">
    <property type="nucleotide sequence ID" value="NC_003197.2"/>
</dbReference>
<dbReference type="SMR" id="P0A1D7"/>
<dbReference type="STRING" id="99287.STM0448"/>
<dbReference type="MEROPS" id="S14.001"/>
<dbReference type="PaxDb" id="99287-STM0448"/>
<dbReference type="GeneID" id="1251968"/>
<dbReference type="GeneID" id="66754911"/>
<dbReference type="KEGG" id="stm:STM0448"/>
<dbReference type="PATRIC" id="fig|99287.12.peg.480"/>
<dbReference type="HOGENOM" id="CLU_058707_3_2_6"/>
<dbReference type="OMA" id="RDYWMKA"/>
<dbReference type="PhylomeDB" id="P0A1D7"/>
<dbReference type="BioCyc" id="SENT99287:STM0448-MONOMER"/>
<dbReference type="PHI-base" id="PHI:3040"/>
<dbReference type="Proteomes" id="UP000001014">
    <property type="component" value="Chromosome"/>
</dbReference>
<dbReference type="GO" id="GO:0005737">
    <property type="term" value="C:cytoplasm"/>
    <property type="evidence" value="ECO:0007669"/>
    <property type="project" value="UniProtKB-SubCell"/>
</dbReference>
<dbReference type="GO" id="GO:0009368">
    <property type="term" value="C:endopeptidase Clp complex"/>
    <property type="evidence" value="ECO:0000318"/>
    <property type="project" value="GO_Central"/>
</dbReference>
<dbReference type="GO" id="GO:0004176">
    <property type="term" value="F:ATP-dependent peptidase activity"/>
    <property type="evidence" value="ECO:0000318"/>
    <property type="project" value="GO_Central"/>
</dbReference>
<dbReference type="GO" id="GO:0051117">
    <property type="term" value="F:ATPase binding"/>
    <property type="evidence" value="ECO:0000318"/>
    <property type="project" value="GO_Central"/>
</dbReference>
<dbReference type="GO" id="GO:0004252">
    <property type="term" value="F:serine-type endopeptidase activity"/>
    <property type="evidence" value="ECO:0000318"/>
    <property type="project" value="GO_Central"/>
</dbReference>
<dbReference type="GO" id="GO:0006515">
    <property type="term" value="P:protein quality control for misfolded or incompletely synthesized proteins"/>
    <property type="evidence" value="ECO:0000318"/>
    <property type="project" value="GO_Central"/>
</dbReference>
<dbReference type="CDD" id="cd07017">
    <property type="entry name" value="S14_ClpP_2"/>
    <property type="match status" value="1"/>
</dbReference>
<dbReference type="FunFam" id="3.90.226.10:FF:000001">
    <property type="entry name" value="ATP-dependent Clp protease proteolytic subunit"/>
    <property type="match status" value="1"/>
</dbReference>
<dbReference type="Gene3D" id="3.90.226.10">
    <property type="entry name" value="2-enoyl-CoA Hydratase, Chain A, domain 1"/>
    <property type="match status" value="1"/>
</dbReference>
<dbReference type="HAMAP" id="MF_00444">
    <property type="entry name" value="ClpP"/>
    <property type="match status" value="1"/>
</dbReference>
<dbReference type="InterPro" id="IPR001907">
    <property type="entry name" value="ClpP"/>
</dbReference>
<dbReference type="InterPro" id="IPR029045">
    <property type="entry name" value="ClpP/crotonase-like_dom_sf"/>
</dbReference>
<dbReference type="InterPro" id="IPR023562">
    <property type="entry name" value="ClpP/TepA"/>
</dbReference>
<dbReference type="InterPro" id="IPR033135">
    <property type="entry name" value="ClpP_His_AS"/>
</dbReference>
<dbReference type="InterPro" id="IPR018215">
    <property type="entry name" value="ClpP_Ser_AS"/>
</dbReference>
<dbReference type="NCBIfam" id="TIGR00493">
    <property type="entry name" value="clpP"/>
    <property type="match status" value="1"/>
</dbReference>
<dbReference type="NCBIfam" id="NF001368">
    <property type="entry name" value="PRK00277.1"/>
    <property type="match status" value="1"/>
</dbReference>
<dbReference type="NCBIfam" id="NF009205">
    <property type="entry name" value="PRK12553.1"/>
    <property type="match status" value="1"/>
</dbReference>
<dbReference type="PANTHER" id="PTHR10381">
    <property type="entry name" value="ATP-DEPENDENT CLP PROTEASE PROTEOLYTIC SUBUNIT"/>
    <property type="match status" value="1"/>
</dbReference>
<dbReference type="PANTHER" id="PTHR10381:SF70">
    <property type="entry name" value="ATP-DEPENDENT CLP PROTEASE PROTEOLYTIC SUBUNIT"/>
    <property type="match status" value="1"/>
</dbReference>
<dbReference type="Pfam" id="PF00574">
    <property type="entry name" value="CLP_protease"/>
    <property type="match status" value="1"/>
</dbReference>
<dbReference type="PRINTS" id="PR00127">
    <property type="entry name" value="CLPPROTEASEP"/>
</dbReference>
<dbReference type="SUPFAM" id="SSF52096">
    <property type="entry name" value="ClpP/crotonase"/>
    <property type="match status" value="1"/>
</dbReference>
<dbReference type="PROSITE" id="PS00382">
    <property type="entry name" value="CLP_PROTEASE_HIS"/>
    <property type="match status" value="1"/>
</dbReference>
<dbReference type="PROSITE" id="PS00381">
    <property type="entry name" value="CLP_PROTEASE_SER"/>
    <property type="match status" value="1"/>
</dbReference>
<gene>
    <name evidence="2" type="primary">clpP</name>
    <name type="ordered locus">STM0448</name>
</gene>
<reference key="1">
    <citation type="journal article" date="2001" name="Infect. Immun.">
        <title>Disruption of the genes for ClpXP protease in Salmonella enterica serovar Typhimurium results in persistent infection in mice, and development of persistence requires endogenous gamma interferon and tumor necrosis factor alpha.</title>
        <authorList>
            <person name="Yamamoto T."/>
            <person name="Sashinami H."/>
            <person name="Takaya A."/>
            <person name="Tomoyasu T."/>
            <person name="Matsui H."/>
            <person name="Kikuchi Y."/>
            <person name="Hanawa T."/>
            <person name="Kamiya S."/>
            <person name="Nakane A."/>
        </authorList>
    </citation>
    <scope>NUCLEOTIDE SEQUENCE [GENOMIC DNA]</scope>
    <source>
        <strain>x3306</strain>
    </source>
</reference>
<reference key="2">
    <citation type="journal article" date="2001" name="Nature">
        <title>Complete genome sequence of Salmonella enterica serovar Typhimurium LT2.</title>
        <authorList>
            <person name="McClelland M."/>
            <person name="Sanderson K.E."/>
            <person name="Spieth J."/>
            <person name="Clifton S.W."/>
            <person name="Latreille P."/>
            <person name="Courtney L."/>
            <person name="Porwollik S."/>
            <person name="Ali J."/>
            <person name="Dante M."/>
            <person name="Du F."/>
            <person name="Hou S."/>
            <person name="Layman D."/>
            <person name="Leonard S."/>
            <person name="Nguyen C."/>
            <person name="Scott K."/>
            <person name="Holmes A."/>
            <person name="Grewal N."/>
            <person name="Mulvaney E."/>
            <person name="Ryan E."/>
            <person name="Sun H."/>
            <person name="Florea L."/>
            <person name="Miller W."/>
            <person name="Stoneking T."/>
            <person name="Nhan M."/>
            <person name="Waterston R."/>
            <person name="Wilson R.K."/>
        </authorList>
    </citation>
    <scope>NUCLEOTIDE SEQUENCE [LARGE SCALE GENOMIC DNA]</scope>
    <source>
        <strain>LT2 / SGSC1412 / ATCC 700720</strain>
    </source>
</reference>